<accession>P39612</accession>
<protein>
    <recommendedName>
        <fullName>Uncharacterized protein YwdD</fullName>
    </recommendedName>
</protein>
<sequence>MDKETYVSEIKSGLKGLPEGEAMIEEIESHIEHHLFRSFQEGKSEEEAMQTLLQAFGTPTDIVSSFKKIQPVTFRAFLMFHLFCNSALFAVGIAITIMHVWLESPFVQAVWKGISVSVWLILAAYMIYWVLIGYQGVKEFGKRGEKLVLHTILISMVPNVIFMLVFLFNVIPAALFQSLLTPWFVGTCAFATLLFPLFGRMGCYIGRRQLV</sequence>
<dbReference type="EMBL" id="X73124">
    <property type="protein sequence ID" value="CAA51610.1"/>
    <property type="status" value="ALT_INIT"/>
    <property type="molecule type" value="Genomic_DNA"/>
</dbReference>
<dbReference type="EMBL" id="AL009126">
    <property type="protein sequence ID" value="CAB15826.2"/>
    <property type="molecule type" value="Genomic_DNA"/>
</dbReference>
<dbReference type="PIR" id="S39709">
    <property type="entry name" value="S39709"/>
</dbReference>
<dbReference type="RefSeq" id="NP_391679.2">
    <property type="nucleotide sequence ID" value="NC_000964.3"/>
</dbReference>
<dbReference type="RefSeq" id="WP_003227434.1">
    <property type="nucleotide sequence ID" value="NZ_OZ025638.1"/>
</dbReference>
<dbReference type="SMR" id="P39612"/>
<dbReference type="FunCoup" id="P39612">
    <property type="interactions" value="26"/>
</dbReference>
<dbReference type="STRING" id="224308.BSU38000"/>
<dbReference type="PaxDb" id="224308-BSU38000"/>
<dbReference type="EnsemblBacteria" id="CAB15826">
    <property type="protein sequence ID" value="CAB15826"/>
    <property type="gene ID" value="BSU_38000"/>
</dbReference>
<dbReference type="GeneID" id="937267"/>
<dbReference type="KEGG" id="bsu:BSU38000"/>
<dbReference type="PATRIC" id="fig|224308.179.peg.4114"/>
<dbReference type="eggNOG" id="ENOG502ZB4Y">
    <property type="taxonomic scope" value="Bacteria"/>
</dbReference>
<dbReference type="InParanoid" id="P39612"/>
<dbReference type="OrthoDB" id="2705958at2"/>
<dbReference type="BioCyc" id="BSUB:BSU38000-MONOMER"/>
<dbReference type="Proteomes" id="UP000001570">
    <property type="component" value="Chromosome"/>
</dbReference>
<dbReference type="GO" id="GO:0005886">
    <property type="term" value="C:plasma membrane"/>
    <property type="evidence" value="ECO:0007669"/>
    <property type="project" value="UniProtKB-SubCell"/>
</dbReference>
<dbReference type="InterPro" id="IPR047928">
    <property type="entry name" value="Perm_prefix_1"/>
</dbReference>
<dbReference type="NCBIfam" id="NF038403">
    <property type="entry name" value="perm_prefix_1"/>
    <property type="match status" value="1"/>
</dbReference>
<dbReference type="Pfam" id="PF22564">
    <property type="entry name" value="HAAS"/>
    <property type="match status" value="1"/>
</dbReference>
<keyword id="KW-1003">Cell membrane</keyword>
<keyword id="KW-0472">Membrane</keyword>
<keyword id="KW-1185">Reference proteome</keyword>
<keyword id="KW-0812">Transmembrane</keyword>
<keyword id="KW-1133">Transmembrane helix</keyword>
<gene>
    <name type="primary">ywdD</name>
    <name type="ordered locus">BSU38000</name>
    <name type="ORF">ipa-54d</name>
</gene>
<comment type="subcellular location">
    <subcellularLocation>
        <location evidence="2">Cell membrane</location>
        <topology evidence="2">Multi-pass membrane protein</topology>
    </subcellularLocation>
</comment>
<comment type="sequence caution" evidence="2">
    <conflict type="erroneous initiation">
        <sequence resource="EMBL-CDS" id="CAA51610"/>
    </conflict>
</comment>
<proteinExistence type="predicted"/>
<organism>
    <name type="scientific">Bacillus subtilis (strain 168)</name>
    <dbReference type="NCBI Taxonomy" id="224308"/>
    <lineage>
        <taxon>Bacteria</taxon>
        <taxon>Bacillati</taxon>
        <taxon>Bacillota</taxon>
        <taxon>Bacilli</taxon>
        <taxon>Bacillales</taxon>
        <taxon>Bacillaceae</taxon>
        <taxon>Bacillus</taxon>
    </lineage>
</organism>
<evidence type="ECO:0000255" key="1"/>
<evidence type="ECO:0000305" key="2"/>
<reference key="1">
    <citation type="journal article" date="1993" name="Mol. Microbiol.">
        <title>Bacillus subtilis genome project: cloning and sequencing of the 97 kb region from 325 degrees to 333 degrees.</title>
        <authorList>
            <person name="Glaser P."/>
            <person name="Kunst F."/>
            <person name="Arnaud M."/>
            <person name="Coudart M.P."/>
            <person name="Gonzales W."/>
            <person name="Hullo M.-F."/>
            <person name="Ionescu M."/>
            <person name="Lubochinsky B."/>
            <person name="Marcelino L."/>
            <person name="Moszer I."/>
            <person name="Presecan E."/>
            <person name="Santana M."/>
            <person name="Schneider E."/>
            <person name="Schweizer J."/>
            <person name="Vertes A."/>
            <person name="Rapoport G."/>
            <person name="Danchin A."/>
        </authorList>
    </citation>
    <scope>NUCLEOTIDE SEQUENCE [GENOMIC DNA]</scope>
    <source>
        <strain>168</strain>
    </source>
</reference>
<reference key="2">
    <citation type="journal article" date="1997" name="Nature">
        <title>The complete genome sequence of the Gram-positive bacterium Bacillus subtilis.</title>
        <authorList>
            <person name="Kunst F."/>
            <person name="Ogasawara N."/>
            <person name="Moszer I."/>
            <person name="Albertini A.M."/>
            <person name="Alloni G."/>
            <person name="Azevedo V."/>
            <person name="Bertero M.G."/>
            <person name="Bessieres P."/>
            <person name="Bolotin A."/>
            <person name="Borchert S."/>
            <person name="Borriss R."/>
            <person name="Boursier L."/>
            <person name="Brans A."/>
            <person name="Braun M."/>
            <person name="Brignell S.C."/>
            <person name="Bron S."/>
            <person name="Brouillet S."/>
            <person name="Bruschi C.V."/>
            <person name="Caldwell B."/>
            <person name="Capuano V."/>
            <person name="Carter N.M."/>
            <person name="Choi S.-K."/>
            <person name="Codani J.-J."/>
            <person name="Connerton I.F."/>
            <person name="Cummings N.J."/>
            <person name="Daniel R.A."/>
            <person name="Denizot F."/>
            <person name="Devine K.M."/>
            <person name="Duesterhoeft A."/>
            <person name="Ehrlich S.D."/>
            <person name="Emmerson P.T."/>
            <person name="Entian K.-D."/>
            <person name="Errington J."/>
            <person name="Fabret C."/>
            <person name="Ferrari E."/>
            <person name="Foulger D."/>
            <person name="Fritz C."/>
            <person name="Fujita M."/>
            <person name="Fujita Y."/>
            <person name="Fuma S."/>
            <person name="Galizzi A."/>
            <person name="Galleron N."/>
            <person name="Ghim S.-Y."/>
            <person name="Glaser P."/>
            <person name="Goffeau A."/>
            <person name="Golightly E.J."/>
            <person name="Grandi G."/>
            <person name="Guiseppi G."/>
            <person name="Guy B.J."/>
            <person name="Haga K."/>
            <person name="Haiech J."/>
            <person name="Harwood C.R."/>
            <person name="Henaut A."/>
            <person name="Hilbert H."/>
            <person name="Holsappel S."/>
            <person name="Hosono S."/>
            <person name="Hullo M.-F."/>
            <person name="Itaya M."/>
            <person name="Jones L.-M."/>
            <person name="Joris B."/>
            <person name="Karamata D."/>
            <person name="Kasahara Y."/>
            <person name="Klaerr-Blanchard M."/>
            <person name="Klein C."/>
            <person name="Kobayashi Y."/>
            <person name="Koetter P."/>
            <person name="Koningstein G."/>
            <person name="Krogh S."/>
            <person name="Kumano M."/>
            <person name="Kurita K."/>
            <person name="Lapidus A."/>
            <person name="Lardinois S."/>
            <person name="Lauber J."/>
            <person name="Lazarevic V."/>
            <person name="Lee S.-M."/>
            <person name="Levine A."/>
            <person name="Liu H."/>
            <person name="Masuda S."/>
            <person name="Mauel C."/>
            <person name="Medigue C."/>
            <person name="Medina N."/>
            <person name="Mellado R.P."/>
            <person name="Mizuno M."/>
            <person name="Moestl D."/>
            <person name="Nakai S."/>
            <person name="Noback M."/>
            <person name="Noone D."/>
            <person name="O'Reilly M."/>
            <person name="Ogawa K."/>
            <person name="Ogiwara A."/>
            <person name="Oudega B."/>
            <person name="Park S.-H."/>
            <person name="Parro V."/>
            <person name="Pohl T.M."/>
            <person name="Portetelle D."/>
            <person name="Porwollik S."/>
            <person name="Prescott A.M."/>
            <person name="Presecan E."/>
            <person name="Pujic P."/>
            <person name="Purnelle B."/>
            <person name="Rapoport G."/>
            <person name="Rey M."/>
            <person name="Reynolds S."/>
            <person name="Rieger M."/>
            <person name="Rivolta C."/>
            <person name="Rocha E."/>
            <person name="Roche B."/>
            <person name="Rose M."/>
            <person name="Sadaie Y."/>
            <person name="Sato T."/>
            <person name="Scanlan E."/>
            <person name="Schleich S."/>
            <person name="Schroeter R."/>
            <person name="Scoffone F."/>
            <person name="Sekiguchi J."/>
            <person name="Sekowska A."/>
            <person name="Seror S.J."/>
            <person name="Serror P."/>
            <person name="Shin B.-S."/>
            <person name="Soldo B."/>
            <person name="Sorokin A."/>
            <person name="Tacconi E."/>
            <person name="Takagi T."/>
            <person name="Takahashi H."/>
            <person name="Takemaru K."/>
            <person name="Takeuchi M."/>
            <person name="Tamakoshi A."/>
            <person name="Tanaka T."/>
            <person name="Terpstra P."/>
            <person name="Tognoni A."/>
            <person name="Tosato V."/>
            <person name="Uchiyama S."/>
            <person name="Vandenbol M."/>
            <person name="Vannier F."/>
            <person name="Vassarotti A."/>
            <person name="Viari A."/>
            <person name="Wambutt R."/>
            <person name="Wedler E."/>
            <person name="Wedler H."/>
            <person name="Weitzenegger T."/>
            <person name="Winters P."/>
            <person name="Wipat A."/>
            <person name="Yamamoto H."/>
            <person name="Yamane K."/>
            <person name="Yasumoto K."/>
            <person name="Yata K."/>
            <person name="Yoshida K."/>
            <person name="Yoshikawa H.-F."/>
            <person name="Zumstein E."/>
            <person name="Yoshikawa H."/>
            <person name="Danchin A."/>
        </authorList>
    </citation>
    <scope>NUCLEOTIDE SEQUENCE [LARGE SCALE GENOMIC DNA]</scope>
    <source>
        <strain>168</strain>
    </source>
</reference>
<name>YWDD_BACSU</name>
<feature type="chain" id="PRO_0000049965" description="Uncharacterized protein YwdD">
    <location>
        <begin position="1"/>
        <end position="211"/>
    </location>
</feature>
<feature type="transmembrane region" description="Helical" evidence="1">
    <location>
        <begin position="77"/>
        <end position="97"/>
    </location>
</feature>
<feature type="transmembrane region" description="Helical" evidence="1">
    <location>
        <begin position="113"/>
        <end position="133"/>
    </location>
</feature>
<feature type="transmembrane region" description="Helical" evidence="1">
    <location>
        <begin position="152"/>
        <end position="172"/>
    </location>
</feature>
<feature type="transmembrane region" description="Helical" evidence="1">
    <location>
        <begin position="179"/>
        <end position="199"/>
    </location>
</feature>